<gene>
    <name evidence="1" type="primary">rpmG3</name>
    <name type="ordered locus">BA_4570</name>
    <name type="ordered locus">GBAA_4570</name>
    <name type="ordered locus">BAS4240</name>
</gene>
<evidence type="ECO:0000255" key="1">
    <source>
        <dbReference type="HAMAP-Rule" id="MF_00294"/>
    </source>
</evidence>
<sequence>MRVNITLACTECGDRNYISKKNKRNNPERIELKKYCPRLKRVTLHRETK</sequence>
<feature type="chain" id="PRO_0000356381" description="Large ribosomal subunit protein bL33C">
    <location>
        <begin position="1"/>
        <end position="49"/>
    </location>
</feature>
<keyword id="KW-1185">Reference proteome</keyword>
<keyword id="KW-0687">Ribonucleoprotein</keyword>
<keyword id="KW-0689">Ribosomal protein</keyword>
<comment type="similarity">
    <text evidence="1">Belongs to the bacterial ribosomal protein bL33 family.</text>
</comment>
<organism>
    <name type="scientific">Bacillus anthracis</name>
    <dbReference type="NCBI Taxonomy" id="1392"/>
    <lineage>
        <taxon>Bacteria</taxon>
        <taxon>Bacillati</taxon>
        <taxon>Bacillota</taxon>
        <taxon>Bacilli</taxon>
        <taxon>Bacillales</taxon>
        <taxon>Bacillaceae</taxon>
        <taxon>Bacillus</taxon>
        <taxon>Bacillus cereus group</taxon>
    </lineage>
</organism>
<reference key="1">
    <citation type="journal article" date="2003" name="Nature">
        <title>The genome sequence of Bacillus anthracis Ames and comparison to closely related bacteria.</title>
        <authorList>
            <person name="Read T.D."/>
            <person name="Peterson S.N."/>
            <person name="Tourasse N.J."/>
            <person name="Baillie L.W."/>
            <person name="Paulsen I.T."/>
            <person name="Nelson K.E."/>
            <person name="Tettelin H."/>
            <person name="Fouts D.E."/>
            <person name="Eisen J.A."/>
            <person name="Gill S.R."/>
            <person name="Holtzapple E.K."/>
            <person name="Okstad O.A."/>
            <person name="Helgason E."/>
            <person name="Rilstone J."/>
            <person name="Wu M."/>
            <person name="Kolonay J.F."/>
            <person name="Beanan M.J."/>
            <person name="Dodson R.J."/>
            <person name="Brinkac L.M."/>
            <person name="Gwinn M.L."/>
            <person name="DeBoy R.T."/>
            <person name="Madpu R."/>
            <person name="Daugherty S.C."/>
            <person name="Durkin A.S."/>
            <person name="Haft D.H."/>
            <person name="Nelson W.C."/>
            <person name="Peterson J.D."/>
            <person name="Pop M."/>
            <person name="Khouri H.M."/>
            <person name="Radune D."/>
            <person name="Benton J.L."/>
            <person name="Mahamoud Y."/>
            <person name="Jiang L."/>
            <person name="Hance I.R."/>
            <person name="Weidman J.F."/>
            <person name="Berry K.J."/>
            <person name="Plaut R.D."/>
            <person name="Wolf A.M."/>
            <person name="Watkins K.L."/>
            <person name="Nierman W.C."/>
            <person name="Hazen A."/>
            <person name="Cline R.T."/>
            <person name="Redmond C."/>
            <person name="Thwaite J.E."/>
            <person name="White O."/>
            <person name="Salzberg S.L."/>
            <person name="Thomason B."/>
            <person name="Friedlander A.M."/>
            <person name="Koehler T.M."/>
            <person name="Hanna P.C."/>
            <person name="Kolstoe A.-B."/>
            <person name="Fraser C.M."/>
        </authorList>
    </citation>
    <scope>NUCLEOTIDE SEQUENCE [LARGE SCALE GENOMIC DNA]</scope>
    <source>
        <strain>Ames / isolate Porton</strain>
    </source>
</reference>
<reference key="2">
    <citation type="submission" date="2004-01" db="EMBL/GenBank/DDBJ databases">
        <title>Complete genome sequence of Bacillus anthracis Sterne.</title>
        <authorList>
            <person name="Brettin T.S."/>
            <person name="Bruce D."/>
            <person name="Challacombe J.F."/>
            <person name="Gilna P."/>
            <person name="Han C."/>
            <person name="Hill K."/>
            <person name="Hitchcock P."/>
            <person name="Jackson P."/>
            <person name="Keim P."/>
            <person name="Longmire J."/>
            <person name="Lucas S."/>
            <person name="Okinaka R."/>
            <person name="Richardson P."/>
            <person name="Rubin E."/>
            <person name="Tice H."/>
        </authorList>
    </citation>
    <scope>NUCLEOTIDE SEQUENCE [LARGE SCALE GENOMIC DNA]</scope>
    <source>
        <strain>Sterne</strain>
    </source>
</reference>
<reference key="3">
    <citation type="journal article" date="2009" name="J. Bacteriol.">
        <title>The complete genome sequence of Bacillus anthracis Ames 'Ancestor'.</title>
        <authorList>
            <person name="Ravel J."/>
            <person name="Jiang L."/>
            <person name="Stanley S.T."/>
            <person name="Wilson M.R."/>
            <person name="Decker R.S."/>
            <person name="Read T.D."/>
            <person name="Worsham P."/>
            <person name="Keim P.S."/>
            <person name="Salzberg S.L."/>
            <person name="Fraser-Liggett C.M."/>
            <person name="Rasko D.A."/>
        </authorList>
    </citation>
    <scope>NUCLEOTIDE SEQUENCE [LARGE SCALE GENOMIC DNA]</scope>
    <source>
        <strain>Ames ancestor</strain>
    </source>
</reference>
<proteinExistence type="inferred from homology"/>
<name>RL333_BACAN</name>
<accession>Q81LP3</accession>
<accession>Q6HT50</accession>
<accession>Q6KMD8</accession>
<dbReference type="EMBL" id="AE016879">
    <property type="protein sequence ID" value="AAP28278.1"/>
    <property type="molecule type" value="Genomic_DNA"/>
</dbReference>
<dbReference type="EMBL" id="AE017334">
    <property type="protein sequence ID" value="AAT33690.1"/>
    <property type="molecule type" value="Genomic_DNA"/>
</dbReference>
<dbReference type="EMBL" id="AE017225">
    <property type="protein sequence ID" value="AAT56539.1"/>
    <property type="molecule type" value="Genomic_DNA"/>
</dbReference>
<dbReference type="RefSeq" id="NP_846792.1">
    <property type="nucleotide sequence ID" value="NC_003997.3"/>
</dbReference>
<dbReference type="RefSeq" id="YP_030488.1">
    <property type="nucleotide sequence ID" value="NC_005945.1"/>
</dbReference>
<dbReference type="SMR" id="Q81LP3"/>
<dbReference type="STRING" id="261594.GBAA_4570"/>
<dbReference type="DNASU" id="1088338"/>
<dbReference type="KEGG" id="ban:BA_4570"/>
<dbReference type="KEGG" id="bar:GBAA_4570"/>
<dbReference type="KEGG" id="bat:BAS4240"/>
<dbReference type="PATRIC" id="fig|198094.11.peg.4536"/>
<dbReference type="eggNOG" id="COG0267">
    <property type="taxonomic scope" value="Bacteria"/>
</dbReference>
<dbReference type="HOGENOM" id="CLU_190949_0_2_9"/>
<dbReference type="OrthoDB" id="197660at2"/>
<dbReference type="Proteomes" id="UP000000427">
    <property type="component" value="Chromosome"/>
</dbReference>
<dbReference type="Proteomes" id="UP000000594">
    <property type="component" value="Chromosome"/>
</dbReference>
<dbReference type="GO" id="GO:0005737">
    <property type="term" value="C:cytoplasm"/>
    <property type="evidence" value="ECO:0007669"/>
    <property type="project" value="UniProtKB-ARBA"/>
</dbReference>
<dbReference type="GO" id="GO:1990904">
    <property type="term" value="C:ribonucleoprotein complex"/>
    <property type="evidence" value="ECO:0007669"/>
    <property type="project" value="UniProtKB-KW"/>
</dbReference>
<dbReference type="GO" id="GO:0005840">
    <property type="term" value="C:ribosome"/>
    <property type="evidence" value="ECO:0007669"/>
    <property type="project" value="UniProtKB-KW"/>
</dbReference>
<dbReference type="GO" id="GO:0003735">
    <property type="term" value="F:structural constituent of ribosome"/>
    <property type="evidence" value="ECO:0007669"/>
    <property type="project" value="InterPro"/>
</dbReference>
<dbReference type="GO" id="GO:0006412">
    <property type="term" value="P:translation"/>
    <property type="evidence" value="ECO:0007669"/>
    <property type="project" value="UniProtKB-UniRule"/>
</dbReference>
<dbReference type="Gene3D" id="2.20.28.120">
    <property type="entry name" value="Ribosomal protein L33"/>
    <property type="match status" value="1"/>
</dbReference>
<dbReference type="HAMAP" id="MF_00294">
    <property type="entry name" value="Ribosomal_bL33"/>
    <property type="match status" value="1"/>
</dbReference>
<dbReference type="InterPro" id="IPR001705">
    <property type="entry name" value="Ribosomal_bL33"/>
</dbReference>
<dbReference type="InterPro" id="IPR018264">
    <property type="entry name" value="Ribosomal_bL33_CS"/>
</dbReference>
<dbReference type="InterPro" id="IPR038584">
    <property type="entry name" value="Ribosomal_bL33_sf"/>
</dbReference>
<dbReference type="InterPro" id="IPR011332">
    <property type="entry name" value="Ribosomal_zn-bd"/>
</dbReference>
<dbReference type="NCBIfam" id="NF001764">
    <property type="entry name" value="PRK00504.1"/>
    <property type="match status" value="1"/>
</dbReference>
<dbReference type="NCBIfam" id="NF001860">
    <property type="entry name" value="PRK00595.1"/>
    <property type="match status" value="1"/>
</dbReference>
<dbReference type="NCBIfam" id="TIGR01023">
    <property type="entry name" value="rpmG_bact"/>
    <property type="match status" value="1"/>
</dbReference>
<dbReference type="PANTHER" id="PTHR43168">
    <property type="entry name" value="50S RIBOSOMAL PROTEIN L33, CHLOROPLASTIC"/>
    <property type="match status" value="1"/>
</dbReference>
<dbReference type="PANTHER" id="PTHR43168:SF2">
    <property type="entry name" value="LARGE RIBOSOMAL SUBUNIT PROTEIN BL33C"/>
    <property type="match status" value="1"/>
</dbReference>
<dbReference type="Pfam" id="PF00471">
    <property type="entry name" value="Ribosomal_L33"/>
    <property type="match status" value="1"/>
</dbReference>
<dbReference type="SUPFAM" id="SSF57829">
    <property type="entry name" value="Zn-binding ribosomal proteins"/>
    <property type="match status" value="1"/>
</dbReference>
<dbReference type="PROSITE" id="PS00582">
    <property type="entry name" value="RIBOSOMAL_L33"/>
    <property type="match status" value="1"/>
</dbReference>
<protein>
    <recommendedName>
        <fullName evidence="1">Large ribosomal subunit protein bL33C</fullName>
    </recommendedName>
    <alternativeName>
        <fullName evidence="1">50S ribosomal protein L33 3</fullName>
    </alternativeName>
</protein>